<name>SUGC_MYCTU</name>
<keyword id="KW-0002">3D-structure</keyword>
<keyword id="KW-0067">ATP-binding</keyword>
<keyword id="KW-0997">Cell inner membrane</keyword>
<keyword id="KW-1003">Cell membrane</keyword>
<keyword id="KW-0472">Membrane</keyword>
<keyword id="KW-0547">Nucleotide-binding</keyword>
<keyword id="KW-1185">Reference proteome</keyword>
<keyword id="KW-0762">Sugar transport</keyword>
<keyword id="KW-1278">Translocase</keyword>
<keyword id="KW-0813">Transport</keyword>
<reference key="1">
    <citation type="journal article" date="1998" name="Nature">
        <title>Deciphering the biology of Mycobacterium tuberculosis from the complete genome sequence.</title>
        <authorList>
            <person name="Cole S.T."/>
            <person name="Brosch R."/>
            <person name="Parkhill J."/>
            <person name="Garnier T."/>
            <person name="Churcher C.M."/>
            <person name="Harris D.E."/>
            <person name="Gordon S.V."/>
            <person name="Eiglmeier K."/>
            <person name="Gas S."/>
            <person name="Barry C.E. III"/>
            <person name="Tekaia F."/>
            <person name="Badcock K."/>
            <person name="Basham D."/>
            <person name="Brown D."/>
            <person name="Chillingworth T."/>
            <person name="Connor R."/>
            <person name="Davies R.M."/>
            <person name="Devlin K."/>
            <person name="Feltwell T."/>
            <person name="Gentles S."/>
            <person name="Hamlin N."/>
            <person name="Holroyd S."/>
            <person name="Hornsby T."/>
            <person name="Jagels K."/>
            <person name="Krogh A."/>
            <person name="McLean J."/>
            <person name="Moule S."/>
            <person name="Murphy L.D."/>
            <person name="Oliver S."/>
            <person name="Osborne J."/>
            <person name="Quail M.A."/>
            <person name="Rajandream M.A."/>
            <person name="Rogers J."/>
            <person name="Rutter S."/>
            <person name="Seeger K."/>
            <person name="Skelton S."/>
            <person name="Squares S."/>
            <person name="Squares R."/>
            <person name="Sulston J.E."/>
            <person name="Taylor K."/>
            <person name="Whitehead S."/>
            <person name="Barrell B.G."/>
        </authorList>
    </citation>
    <scope>NUCLEOTIDE SEQUENCE [LARGE SCALE GENOMIC DNA]</scope>
    <source>
        <strain>ATCC 25618 / H37Rv</strain>
    </source>
</reference>
<reference key="2">
    <citation type="journal article" date="2010" name="Proc. Natl. Acad. Sci. U.S.A.">
        <title>Trehalose-recycling ABC transporter LpqY-SugA-SugB-SugC is essential for virulence of Mycobacterium tuberculosis.</title>
        <authorList>
            <person name="Kalscheuer R."/>
            <person name="Weinrick B."/>
            <person name="Veeraraghavan U."/>
            <person name="Besra G.S."/>
            <person name="Jacobs W.R. Jr."/>
        </authorList>
    </citation>
    <scope>FUNCTION IN TREHALOSE IMPORT</scope>
    <scope>SUBUNIT</scope>
    <scope>DISRUPTION PHENOTYPE</scope>
    <source>
        <strain>ATCC 25618 / H37Rv</strain>
    </source>
</reference>
<reference key="3">
    <citation type="journal article" date="2011" name="Mol. Cell. Proteomics">
        <title>Proteogenomic analysis of Mycobacterium tuberculosis by high resolution mass spectrometry.</title>
        <authorList>
            <person name="Kelkar D.S."/>
            <person name="Kumar D."/>
            <person name="Kumar P."/>
            <person name="Balakrishnan L."/>
            <person name="Muthusamy B."/>
            <person name="Yadav A.K."/>
            <person name="Shrivastava P."/>
            <person name="Marimuthu A."/>
            <person name="Anand S."/>
            <person name="Sundaram H."/>
            <person name="Kingsbury R."/>
            <person name="Harsha H.C."/>
            <person name="Nair B."/>
            <person name="Prasad T.S."/>
            <person name="Chauhan D.S."/>
            <person name="Katoch K."/>
            <person name="Katoch V.M."/>
            <person name="Kumar P."/>
            <person name="Chaerkady R."/>
            <person name="Ramachandran S."/>
            <person name="Dash D."/>
            <person name="Pandey A."/>
        </authorList>
    </citation>
    <scope>IDENTIFICATION BY MASS SPECTROMETRY [LARGE SCALE ANALYSIS]</scope>
    <source>
        <strain>ATCC 25618 / H37Rv</strain>
    </source>
</reference>
<reference key="4">
    <citation type="journal article" date="2020" name="Int. J. Biol. Macromol.">
        <title>Biochemical and biophysical characterization of nucleotide binding domain of Trehalose transporter from Mycobacterium tuberculosis.</title>
        <authorList>
            <person name="Sabharwal N."/>
            <person name="Varshney K."/>
            <person name="Rath P.P."/>
            <person name="Gourinath S."/>
            <person name="Das U."/>
        </authorList>
    </citation>
    <scope>FUNCTION</scope>
    <scope>CATALYTIC ACTIVITY</scope>
    <scope>BIOPHYSICOCHEMICAL PROPERTIES</scope>
    <scope>SUBUNIT</scope>
    <scope>DOMAIN</scope>
    <scope>MOTIF</scope>
    <scope>MUTAGENESIS OF HIS-193</scope>
    <scope>CIRCULAR DICHROISM ANALYSIS</scope>
    <scope>3D-STRUCTURE MODELING</scope>
    <source>
        <strain evidence="4">ATCC 25618 / H37Rv</strain>
    </source>
</reference>
<gene>
    <name evidence="4" type="primary">sugC</name>
    <name evidence="4" type="ordered locus">Rv1238</name>
</gene>
<sequence>MAEIVLDHVNKSYPDGHTAVRDLNLTIADGEFLILVGPSGCGKTTTLNMIAGLEDISSGELRIAGERVNEKAPKDRDIAMVFQSYALYPHMTVRQNIAFPLTLAKMRKADIAQKVSETAKILDLTNLLDRKPSQLSGGQRQRVAMGRAIVRHPKAFLMDEPLSNLDAKLRVQMRGEIAQLQRRLGTTTVYVTHDQTEAMTLGDRVVVMYGGIAQQIGTPEELYERPANLFVAGFIGSPAMNFFPARLTAIGLTLPFGEVTLAPEVQGVIAAHPKPENVIVGVRPEHIQDAALIDAYQRIRALTFQVKVNLVESLGADKYLYFTTESPAVHSVQLDELAEVEGESALHENQFVARVPAESKVAIGQSVELAFDTARLAVFDADSGANLTIPHRA</sequence>
<proteinExistence type="evidence at protein level"/>
<feature type="chain" id="PRO_0000419314" description="Trehalose import ATP-binding protein SugC">
    <location>
        <begin position="1"/>
        <end position="393"/>
    </location>
</feature>
<feature type="domain" description="ABC transporter" evidence="1">
    <location>
        <begin position="4"/>
        <end position="235"/>
    </location>
</feature>
<feature type="short sequence motif" description="Helical C-loop; LSGGQ motif" evidence="7">
    <location>
        <begin position="135"/>
        <end position="139"/>
    </location>
</feature>
<feature type="binding site" evidence="1">
    <location>
        <begin position="37"/>
        <end position="44"/>
    </location>
    <ligand>
        <name>ATP</name>
        <dbReference type="ChEBI" id="CHEBI:30616"/>
    </ligand>
</feature>
<feature type="mutagenesis site" description="Decreased hydrolysis of ATP. No change in KM, but 2-fold reduction in Vmax compared to wild-type." evidence="3">
    <original>H</original>
    <variation>A</variation>
    <location>
        <position position="193"/>
    </location>
</feature>
<feature type="strand" evidence="8">
    <location>
        <begin position="4"/>
        <end position="12"/>
    </location>
</feature>
<feature type="strand" evidence="8">
    <location>
        <begin position="18"/>
        <end position="23"/>
    </location>
</feature>
<feature type="strand" evidence="8">
    <location>
        <begin position="33"/>
        <end position="36"/>
    </location>
</feature>
<feature type="helix" evidence="8">
    <location>
        <begin position="43"/>
        <end position="50"/>
    </location>
</feature>
<feature type="strand" evidence="8">
    <location>
        <begin position="57"/>
        <end position="65"/>
    </location>
</feature>
<feature type="strand" evidence="8">
    <location>
        <begin position="69"/>
        <end position="71"/>
    </location>
</feature>
<feature type="helix" evidence="8">
    <location>
        <begin position="73"/>
        <end position="75"/>
    </location>
</feature>
<feature type="strand" evidence="8">
    <location>
        <begin position="79"/>
        <end position="81"/>
    </location>
</feature>
<feature type="turn" evidence="8">
    <location>
        <begin position="83"/>
        <end position="86"/>
    </location>
</feature>
<feature type="strand" evidence="8">
    <location>
        <begin position="89"/>
        <end position="91"/>
    </location>
</feature>
<feature type="helix" evidence="8">
    <location>
        <begin position="93"/>
        <end position="103"/>
    </location>
</feature>
<feature type="helix" evidence="8">
    <location>
        <begin position="108"/>
        <end position="122"/>
    </location>
</feature>
<feature type="turn" evidence="8">
    <location>
        <begin position="125"/>
        <end position="129"/>
    </location>
</feature>
<feature type="helix" evidence="8">
    <location>
        <begin position="132"/>
        <end position="134"/>
    </location>
</feature>
<feature type="helix" evidence="8">
    <location>
        <begin position="137"/>
        <end position="149"/>
    </location>
</feature>
<feature type="strand" evidence="8">
    <location>
        <begin position="156"/>
        <end position="159"/>
    </location>
</feature>
<feature type="turn" evidence="8">
    <location>
        <begin position="161"/>
        <end position="164"/>
    </location>
</feature>
<feature type="helix" evidence="8">
    <location>
        <begin position="167"/>
        <end position="184"/>
    </location>
</feature>
<feature type="helix" evidence="8">
    <location>
        <begin position="195"/>
        <end position="201"/>
    </location>
</feature>
<feature type="strand" evidence="8">
    <location>
        <begin position="203"/>
        <end position="209"/>
    </location>
</feature>
<feature type="strand" evidence="8">
    <location>
        <begin position="212"/>
        <end position="217"/>
    </location>
</feature>
<feature type="helix" evidence="8">
    <location>
        <begin position="219"/>
        <end position="224"/>
    </location>
</feature>
<feature type="helix" evidence="8">
    <location>
        <begin position="229"/>
        <end position="234"/>
    </location>
</feature>
<feature type="strand" evidence="8">
    <location>
        <begin position="235"/>
        <end position="238"/>
    </location>
</feature>
<feature type="strand" evidence="8">
    <location>
        <begin position="241"/>
        <end position="245"/>
    </location>
</feature>
<feature type="strand" evidence="8">
    <location>
        <begin position="251"/>
        <end position="254"/>
    </location>
</feature>
<feature type="strand" evidence="8">
    <location>
        <begin position="257"/>
        <end position="260"/>
    </location>
</feature>
<feature type="helix" evidence="8">
    <location>
        <begin position="263"/>
        <end position="271"/>
    </location>
</feature>
<feature type="strand" evidence="8">
    <location>
        <begin position="276"/>
        <end position="282"/>
    </location>
</feature>
<feature type="turn" evidence="8">
    <location>
        <begin position="284"/>
        <end position="286"/>
    </location>
</feature>
<feature type="helix" evidence="8">
    <location>
        <begin position="295"/>
        <end position="298"/>
    </location>
</feature>
<feature type="strand" evidence="8">
    <location>
        <begin position="304"/>
        <end position="309"/>
    </location>
</feature>
<feature type="strand" evidence="8">
    <location>
        <begin position="317"/>
        <end position="323"/>
    </location>
</feature>
<feature type="turn" evidence="8">
    <location>
        <begin position="332"/>
        <end position="340"/>
    </location>
</feature>
<feature type="strand" evidence="8">
    <location>
        <begin position="341"/>
        <end position="343"/>
    </location>
</feature>
<feature type="strand" evidence="8">
    <location>
        <begin position="345"/>
        <end position="347"/>
    </location>
</feature>
<feature type="strand" evidence="8">
    <location>
        <begin position="350"/>
        <end position="356"/>
    </location>
</feature>
<feature type="strand" evidence="8">
    <location>
        <begin position="367"/>
        <end position="370"/>
    </location>
</feature>
<feature type="strand" evidence="8">
    <location>
        <begin position="377"/>
        <end position="379"/>
    </location>
</feature>
<feature type="strand" evidence="8">
    <location>
        <begin position="381"/>
        <end position="383"/>
    </location>
</feature>
<protein>
    <recommendedName>
        <fullName>Trehalose import ATP-binding protein SugC</fullName>
        <ecNumber evidence="3">7.5.2.-</ecNumber>
    </recommendedName>
    <alternativeName>
        <fullName evidence="4">MtbSugC</fullName>
    </alternativeName>
    <alternativeName>
        <fullName evidence="4">Nucleotide-binding domain of SugABC transporter</fullName>
        <shortName evidence="4">NBD of SugABC transporter</shortName>
    </alternativeName>
    <alternativeName>
        <fullName evidence="4">SugABC transporter ATPase SugC</fullName>
    </alternativeName>
</protein>
<organism>
    <name type="scientific">Mycobacterium tuberculosis (strain ATCC 25618 / H37Rv)</name>
    <dbReference type="NCBI Taxonomy" id="83332"/>
    <lineage>
        <taxon>Bacteria</taxon>
        <taxon>Bacillati</taxon>
        <taxon>Actinomycetota</taxon>
        <taxon>Actinomycetes</taxon>
        <taxon>Mycobacteriales</taxon>
        <taxon>Mycobacteriaceae</taxon>
        <taxon>Mycobacterium</taxon>
        <taxon>Mycobacterium tuberculosis complex</taxon>
    </lineage>
</organism>
<accession>P9WQI3</accession>
<accession>F2GFS4</accession>
<accession>L0T8T0</accession>
<accession>O50454</accession>
<accession>Q7D8J6</accession>
<comment type="function">
    <text evidence="2 3">Part of the ABC transporter complex LpqY-SugA-SugB-SugC, which is highly specific for uptake of trehalose. Involved in the recycling of extracellular trehalose released from trehalose-containing molecules synthesized by M.tuberculosis. Trehalose uptake is essential for virulence (PubMed:21118978). Responsible for energy coupling to the transport system (PubMed:32092417).</text>
</comment>
<comment type="catalytic activity">
    <reaction evidence="3">
        <text>alpha,alpha-trehalose(out) + ATP + H2O = alpha,alpha-trehalose(in) + ADP + phosphate + H(+)</text>
        <dbReference type="Rhea" id="RHEA:75203"/>
        <dbReference type="ChEBI" id="CHEBI:15377"/>
        <dbReference type="ChEBI" id="CHEBI:15378"/>
        <dbReference type="ChEBI" id="CHEBI:16551"/>
        <dbReference type="ChEBI" id="CHEBI:30616"/>
        <dbReference type="ChEBI" id="CHEBI:43474"/>
        <dbReference type="ChEBI" id="CHEBI:456216"/>
    </reaction>
</comment>
<comment type="biophysicochemical properties">
    <kinetics>
        <KM evidence="3">0.15 mM for ATP</KM>
        <Vmax evidence="3">3.78 umol/min/mg enzyme with ATP as substrate</Vmax>
        <text evidence="3">kcat is 1.89 sec(-1).</text>
    </kinetics>
    <phDependence>
        <text evidence="3">Optimum pH is 7.5. Active between pH 6.5-8.5. Unfolds at pH 5.5.</text>
    </phDependence>
</comment>
<comment type="subunit">
    <text evidence="3 6">Monomer. Homodimerizes in the presence of ATP (PubMed:32092417). The complex is composed of two ATP-binding proteins (SugC), two transmembrane proteins (SugA and SugB) and a solute-binding protein (LpqY) (PubMed:21118978).</text>
</comment>
<comment type="subcellular location">
    <subcellularLocation>
        <location evidence="5">Cell inner membrane</location>
        <topology evidence="5">Peripheral membrane protein</topology>
        <orientation evidence="5">Cytoplasmic side</orientation>
    </subcellularLocation>
</comment>
<comment type="domain">
    <text evidence="7">Contains an N-terminal nucleotide-binding domain (NBD) and a C-terminal regulatory domain (RD).</text>
</comment>
<comment type="disruption phenotype">
    <text evidence="2">Mutants show no growth on trehalose as the sole carbon and energy source, but grow normally on glucose. They secrete substantial amounts of trehalose during growth on glycerol.</text>
</comment>
<comment type="similarity">
    <text evidence="5">Belongs to the ABC transporter superfamily.</text>
</comment>
<evidence type="ECO:0000255" key="1">
    <source>
        <dbReference type="PROSITE-ProRule" id="PRU00434"/>
    </source>
</evidence>
<evidence type="ECO:0000269" key="2">
    <source>
    </source>
</evidence>
<evidence type="ECO:0000269" key="3">
    <source>
    </source>
</evidence>
<evidence type="ECO:0000303" key="4">
    <source>
    </source>
</evidence>
<evidence type="ECO:0000305" key="5"/>
<evidence type="ECO:0000305" key="6">
    <source>
    </source>
</evidence>
<evidence type="ECO:0000305" key="7">
    <source>
    </source>
</evidence>
<evidence type="ECO:0007829" key="8">
    <source>
        <dbReference type="PDB" id="8JA7"/>
    </source>
</evidence>
<dbReference type="EC" id="7.5.2.-" evidence="3"/>
<dbReference type="EMBL" id="AL123456">
    <property type="protein sequence ID" value="CCP43994.1"/>
    <property type="molecule type" value="Genomic_DNA"/>
</dbReference>
<dbReference type="PIR" id="E70952">
    <property type="entry name" value="E70952"/>
</dbReference>
<dbReference type="RefSeq" id="NP_215754.1">
    <property type="nucleotide sequence ID" value="NC_000962.3"/>
</dbReference>
<dbReference type="RefSeq" id="WP_003406299.1">
    <property type="nucleotide sequence ID" value="NZ_NVQJ01000039.1"/>
</dbReference>
<dbReference type="PDB" id="8JA7">
    <property type="method" value="EM"/>
    <property type="resolution" value="3.02 A"/>
    <property type="chains" value="C/D=1-393"/>
</dbReference>
<dbReference type="PDBsum" id="8JA7"/>
<dbReference type="EMDB" id="EMD-36125"/>
<dbReference type="SMR" id="P9WQI3"/>
<dbReference type="FunCoup" id="P9WQI3">
    <property type="interactions" value="137"/>
</dbReference>
<dbReference type="STRING" id="83332.Rv1238"/>
<dbReference type="PaxDb" id="83332-Rv1238"/>
<dbReference type="DNASU" id="887104"/>
<dbReference type="GeneID" id="887104"/>
<dbReference type="KEGG" id="mtu:Rv1238"/>
<dbReference type="KEGG" id="mtv:RVBD_1238"/>
<dbReference type="TubercuList" id="Rv1238"/>
<dbReference type="eggNOG" id="COG3842">
    <property type="taxonomic scope" value="Bacteria"/>
</dbReference>
<dbReference type="InParanoid" id="P9WQI3"/>
<dbReference type="OrthoDB" id="9802264at2"/>
<dbReference type="PhylomeDB" id="P9WQI3"/>
<dbReference type="BioCyc" id="MetaCyc:G185E-5409-MONOMER"/>
<dbReference type="Proteomes" id="UP000001584">
    <property type="component" value="Chromosome"/>
</dbReference>
<dbReference type="GO" id="GO:0055052">
    <property type="term" value="C:ATP-binding cassette (ABC) transporter complex, substrate-binding subunit-containing"/>
    <property type="evidence" value="ECO:0000318"/>
    <property type="project" value="GO_Central"/>
</dbReference>
<dbReference type="GO" id="GO:0035796">
    <property type="term" value="C:ATP-binding cassette (ABC) transporter complex, transmembrane substrate-binding subunit-containing"/>
    <property type="evidence" value="ECO:0000315"/>
    <property type="project" value="UniProtKB"/>
</dbReference>
<dbReference type="GO" id="GO:0005886">
    <property type="term" value="C:plasma membrane"/>
    <property type="evidence" value="ECO:0000305"/>
    <property type="project" value="UniProtKB"/>
</dbReference>
<dbReference type="GO" id="GO:0043211">
    <property type="term" value="F:ABC-type carbohydrate transporter activity"/>
    <property type="evidence" value="ECO:0000314"/>
    <property type="project" value="UniProtKB"/>
</dbReference>
<dbReference type="GO" id="GO:0005524">
    <property type="term" value="F:ATP binding"/>
    <property type="evidence" value="ECO:0000314"/>
    <property type="project" value="UniProtKB"/>
</dbReference>
<dbReference type="GO" id="GO:0016887">
    <property type="term" value="F:ATP hydrolysis activity"/>
    <property type="evidence" value="ECO:0000315"/>
    <property type="project" value="UniProtKB"/>
</dbReference>
<dbReference type="GO" id="GO:0042802">
    <property type="term" value="F:identical protein binding"/>
    <property type="evidence" value="ECO:0000314"/>
    <property type="project" value="UniProtKB"/>
</dbReference>
<dbReference type="GO" id="GO:0042803">
    <property type="term" value="F:protein homodimerization activity"/>
    <property type="evidence" value="ECO:0000314"/>
    <property type="project" value="UniProtKB"/>
</dbReference>
<dbReference type="GO" id="GO:0015574">
    <property type="term" value="F:trehalose transmembrane transporter activity"/>
    <property type="evidence" value="ECO:0000314"/>
    <property type="project" value="UniProtKB"/>
</dbReference>
<dbReference type="GO" id="GO:0051701">
    <property type="term" value="P:biological process involved in interaction with host"/>
    <property type="evidence" value="ECO:0000315"/>
    <property type="project" value="MTBBASE"/>
</dbReference>
<dbReference type="GO" id="GO:0015771">
    <property type="term" value="P:trehalose transport"/>
    <property type="evidence" value="ECO:0000314"/>
    <property type="project" value="MTBBASE"/>
</dbReference>
<dbReference type="CDD" id="cd03301">
    <property type="entry name" value="ABC_MalK_N"/>
    <property type="match status" value="1"/>
</dbReference>
<dbReference type="FunFam" id="3.40.50.300:FF:000042">
    <property type="entry name" value="Maltose/maltodextrin ABC transporter, ATP-binding protein"/>
    <property type="match status" value="1"/>
</dbReference>
<dbReference type="Gene3D" id="2.40.50.100">
    <property type="match status" value="2"/>
</dbReference>
<dbReference type="Gene3D" id="2.40.50.140">
    <property type="entry name" value="Nucleic acid-binding proteins"/>
    <property type="match status" value="1"/>
</dbReference>
<dbReference type="Gene3D" id="3.40.50.300">
    <property type="entry name" value="P-loop containing nucleotide triphosphate hydrolases"/>
    <property type="match status" value="1"/>
</dbReference>
<dbReference type="InterPro" id="IPR003593">
    <property type="entry name" value="AAA+_ATPase"/>
</dbReference>
<dbReference type="InterPro" id="IPR003439">
    <property type="entry name" value="ABC_transporter-like_ATP-bd"/>
</dbReference>
<dbReference type="InterPro" id="IPR017871">
    <property type="entry name" value="ABC_transporter-like_CS"/>
</dbReference>
<dbReference type="InterPro" id="IPR015855">
    <property type="entry name" value="ABC_transpr_MalK-like"/>
</dbReference>
<dbReference type="InterPro" id="IPR047641">
    <property type="entry name" value="ABC_transpr_MalK/UgpC-like"/>
</dbReference>
<dbReference type="InterPro" id="IPR008995">
    <property type="entry name" value="Mo/tungstate-bd_C_term_dom"/>
</dbReference>
<dbReference type="InterPro" id="IPR012340">
    <property type="entry name" value="NA-bd_OB-fold"/>
</dbReference>
<dbReference type="InterPro" id="IPR040582">
    <property type="entry name" value="OB_MalK-like"/>
</dbReference>
<dbReference type="InterPro" id="IPR027417">
    <property type="entry name" value="P-loop_NTPase"/>
</dbReference>
<dbReference type="NCBIfam" id="NF008653">
    <property type="entry name" value="PRK11650.1"/>
    <property type="match status" value="1"/>
</dbReference>
<dbReference type="PANTHER" id="PTHR43875">
    <property type="entry name" value="MALTODEXTRIN IMPORT ATP-BINDING PROTEIN MSMX"/>
    <property type="match status" value="1"/>
</dbReference>
<dbReference type="PANTHER" id="PTHR43875:SF15">
    <property type="entry name" value="TREHALOSE IMPORT ATP-BINDING PROTEIN SUGC"/>
    <property type="match status" value="1"/>
</dbReference>
<dbReference type="Pfam" id="PF00005">
    <property type="entry name" value="ABC_tran"/>
    <property type="match status" value="1"/>
</dbReference>
<dbReference type="Pfam" id="PF17912">
    <property type="entry name" value="OB_MalK"/>
    <property type="match status" value="1"/>
</dbReference>
<dbReference type="SMART" id="SM00382">
    <property type="entry name" value="AAA"/>
    <property type="match status" value="1"/>
</dbReference>
<dbReference type="SUPFAM" id="SSF50331">
    <property type="entry name" value="MOP-like"/>
    <property type="match status" value="1"/>
</dbReference>
<dbReference type="SUPFAM" id="SSF52540">
    <property type="entry name" value="P-loop containing nucleoside triphosphate hydrolases"/>
    <property type="match status" value="1"/>
</dbReference>
<dbReference type="PROSITE" id="PS00211">
    <property type="entry name" value="ABC_TRANSPORTER_1"/>
    <property type="match status" value="1"/>
</dbReference>
<dbReference type="PROSITE" id="PS50893">
    <property type="entry name" value="ABC_TRANSPORTER_2"/>
    <property type="match status" value="1"/>
</dbReference>